<protein>
    <recommendedName>
        <fullName>ATP synthase epsilon chain</fullName>
    </recommendedName>
    <alternativeName>
        <fullName>ATP synthase F1 sector epsilon subunit</fullName>
    </alternativeName>
    <alternativeName>
        <fullName>F-ATPase epsilon subunit</fullName>
    </alternativeName>
</protein>
<name>ATPE_GEOSE</name>
<proteinExistence type="inferred from homology"/>
<reference key="1">
    <citation type="submission" date="1994-08" db="EMBL/GenBank/DDBJ databases">
        <authorList>
            <person name="Ishizuka M."/>
            <person name="Imai H."/>
        </authorList>
    </citation>
    <scope>NUCLEOTIDE SEQUENCE [GENOMIC DNA]</scope>
</reference>
<sequence length="132" mass="14382">MKTIHVSVVTPDGPVYEDDVEMVSVKAKSGELGILPGHIPLVAPLEISAARLKKGGKTQYIAFSGGFLEVRPDNVTILAQAAERAEDIDVLRAKARKSGRTPLQSQQDDIDFKRAELALKRAMNRLSVAEMK</sequence>
<comment type="function">
    <text evidence="1">Produces ATP from ADP in the presence of a proton gradient across the membrane.</text>
</comment>
<comment type="subunit">
    <text>F-type ATPases have 2 components, CF(1) - the catalytic core - and CF(0) - the membrane proton channel. CF(1) has five subunits: alpha(3), beta(3), gamma(1), delta(1), epsilon(1). CF(0) has three main subunits: a, b and c.</text>
</comment>
<comment type="subcellular location">
    <subcellularLocation>
        <location evidence="1">Cell membrane</location>
        <topology evidence="1">Peripheral membrane protein</topology>
    </subcellularLocation>
</comment>
<comment type="similarity">
    <text evidence="2">Belongs to the ATPase epsilon chain family.</text>
</comment>
<organism>
    <name type="scientific">Geobacillus stearothermophilus</name>
    <name type="common">Bacillus stearothermophilus</name>
    <dbReference type="NCBI Taxonomy" id="1422"/>
    <lineage>
        <taxon>Bacteria</taxon>
        <taxon>Bacillati</taxon>
        <taxon>Bacillota</taxon>
        <taxon>Bacilli</taxon>
        <taxon>Bacillales</taxon>
        <taxon>Anoxybacillaceae</taxon>
        <taxon>Geobacillus</taxon>
    </lineage>
</organism>
<accession>P42009</accession>
<gene>
    <name type="primary">atpC</name>
</gene>
<evidence type="ECO:0000250" key="1"/>
<evidence type="ECO:0000305" key="2"/>
<dbReference type="EMBL" id="D38060">
    <property type="protein sequence ID" value="BAA07256.1"/>
    <property type="molecule type" value="Genomic_DNA"/>
</dbReference>
<dbReference type="BMRB" id="P42009"/>
<dbReference type="SMR" id="P42009"/>
<dbReference type="GO" id="GO:0005886">
    <property type="term" value="C:plasma membrane"/>
    <property type="evidence" value="ECO:0007669"/>
    <property type="project" value="UniProtKB-SubCell"/>
</dbReference>
<dbReference type="GO" id="GO:0045259">
    <property type="term" value="C:proton-transporting ATP synthase complex"/>
    <property type="evidence" value="ECO:0007669"/>
    <property type="project" value="UniProtKB-KW"/>
</dbReference>
<dbReference type="GO" id="GO:0005524">
    <property type="term" value="F:ATP binding"/>
    <property type="evidence" value="ECO:0007669"/>
    <property type="project" value="UniProtKB-UniRule"/>
</dbReference>
<dbReference type="GO" id="GO:0046933">
    <property type="term" value="F:proton-transporting ATP synthase activity, rotational mechanism"/>
    <property type="evidence" value="ECO:0007669"/>
    <property type="project" value="UniProtKB-UniRule"/>
</dbReference>
<dbReference type="CDD" id="cd12152">
    <property type="entry name" value="F1-ATPase_delta"/>
    <property type="match status" value="1"/>
</dbReference>
<dbReference type="FunFam" id="2.60.15.10:FF:000001">
    <property type="entry name" value="ATP synthase epsilon chain"/>
    <property type="match status" value="1"/>
</dbReference>
<dbReference type="Gene3D" id="1.20.5.440">
    <property type="entry name" value="ATP synthase delta/epsilon subunit, C-terminal domain"/>
    <property type="match status" value="1"/>
</dbReference>
<dbReference type="Gene3D" id="2.60.15.10">
    <property type="entry name" value="F0F1 ATP synthase delta/epsilon subunit, N-terminal"/>
    <property type="match status" value="1"/>
</dbReference>
<dbReference type="HAMAP" id="MF_00530">
    <property type="entry name" value="ATP_synth_epsil_bac"/>
    <property type="match status" value="1"/>
</dbReference>
<dbReference type="InterPro" id="IPR036794">
    <property type="entry name" value="ATP_F1_dsu/esu_C_sf"/>
</dbReference>
<dbReference type="InterPro" id="IPR001469">
    <property type="entry name" value="ATP_synth_F1_dsu/esu"/>
</dbReference>
<dbReference type="InterPro" id="IPR020546">
    <property type="entry name" value="ATP_synth_F1_dsu/esu_N"/>
</dbReference>
<dbReference type="InterPro" id="IPR020547">
    <property type="entry name" value="ATP_synth_F1_esu_C"/>
</dbReference>
<dbReference type="InterPro" id="IPR036771">
    <property type="entry name" value="ATPsynth_dsu/esu_N"/>
</dbReference>
<dbReference type="NCBIfam" id="TIGR01216">
    <property type="entry name" value="ATP_synt_epsi"/>
    <property type="match status" value="1"/>
</dbReference>
<dbReference type="NCBIfam" id="NF001846">
    <property type="entry name" value="PRK00571.1-3"/>
    <property type="match status" value="1"/>
</dbReference>
<dbReference type="NCBIfam" id="NF009980">
    <property type="entry name" value="PRK13446.1"/>
    <property type="match status" value="1"/>
</dbReference>
<dbReference type="PANTHER" id="PTHR13822">
    <property type="entry name" value="ATP SYNTHASE DELTA/EPSILON CHAIN"/>
    <property type="match status" value="1"/>
</dbReference>
<dbReference type="PANTHER" id="PTHR13822:SF10">
    <property type="entry name" value="ATP SYNTHASE EPSILON CHAIN, CHLOROPLASTIC"/>
    <property type="match status" value="1"/>
</dbReference>
<dbReference type="Pfam" id="PF00401">
    <property type="entry name" value="ATP-synt_DE"/>
    <property type="match status" value="1"/>
</dbReference>
<dbReference type="Pfam" id="PF02823">
    <property type="entry name" value="ATP-synt_DE_N"/>
    <property type="match status" value="1"/>
</dbReference>
<dbReference type="SUPFAM" id="SSF46604">
    <property type="entry name" value="Epsilon subunit of F1F0-ATP synthase C-terminal domain"/>
    <property type="match status" value="1"/>
</dbReference>
<dbReference type="SUPFAM" id="SSF51344">
    <property type="entry name" value="Epsilon subunit of F1F0-ATP synthase N-terminal domain"/>
    <property type="match status" value="1"/>
</dbReference>
<feature type="chain" id="PRO_0000188100" description="ATP synthase epsilon chain">
    <location>
        <begin position="1"/>
        <end position="132"/>
    </location>
</feature>
<keyword id="KW-0066">ATP synthesis</keyword>
<keyword id="KW-1003">Cell membrane</keyword>
<keyword id="KW-0139">CF(1)</keyword>
<keyword id="KW-0375">Hydrogen ion transport</keyword>
<keyword id="KW-0406">Ion transport</keyword>
<keyword id="KW-0472">Membrane</keyword>
<keyword id="KW-0813">Transport</keyword>